<evidence type="ECO:0000255" key="1">
    <source>
        <dbReference type="HAMAP-Rule" id="MF_00054"/>
    </source>
</evidence>
<name>EFG_BACC3</name>
<comment type="function">
    <text evidence="1">Catalyzes the GTP-dependent ribosomal translocation step during translation elongation. During this step, the ribosome changes from the pre-translocational (PRE) to the post-translocational (POST) state as the newly formed A-site-bound peptidyl-tRNA and P-site-bound deacylated tRNA move to the P and E sites, respectively. Catalyzes the coordinated movement of the two tRNA molecules, the mRNA and conformational changes in the ribosome.</text>
</comment>
<comment type="subcellular location">
    <subcellularLocation>
        <location evidence="1">Cytoplasm</location>
    </subcellularLocation>
</comment>
<comment type="similarity">
    <text evidence="1">Belongs to the TRAFAC class translation factor GTPase superfamily. Classic translation factor GTPase family. EF-G/EF-2 subfamily.</text>
</comment>
<feature type="chain" id="PRO_1000201434" description="Elongation factor G">
    <location>
        <begin position="1"/>
        <end position="692"/>
    </location>
</feature>
<feature type="domain" description="tr-type G">
    <location>
        <begin position="8"/>
        <end position="282"/>
    </location>
</feature>
<feature type="binding site" evidence="1">
    <location>
        <begin position="17"/>
        <end position="24"/>
    </location>
    <ligand>
        <name>GTP</name>
        <dbReference type="ChEBI" id="CHEBI:37565"/>
    </ligand>
</feature>
<feature type="binding site" evidence="1">
    <location>
        <begin position="81"/>
        <end position="85"/>
    </location>
    <ligand>
        <name>GTP</name>
        <dbReference type="ChEBI" id="CHEBI:37565"/>
    </ligand>
</feature>
<feature type="binding site" evidence="1">
    <location>
        <begin position="135"/>
        <end position="138"/>
    </location>
    <ligand>
        <name>GTP</name>
        <dbReference type="ChEBI" id="CHEBI:37565"/>
    </ligand>
</feature>
<reference key="1">
    <citation type="submission" date="2009-02" db="EMBL/GenBank/DDBJ databases">
        <title>Genome sequence of Bacillus cereus 03BB102.</title>
        <authorList>
            <person name="Dodson R.J."/>
            <person name="Jackson P."/>
            <person name="Munk A.C."/>
            <person name="Brettin T."/>
            <person name="Bruce D."/>
            <person name="Detter C."/>
            <person name="Tapia R."/>
            <person name="Han C."/>
            <person name="Sutton G."/>
            <person name="Sims D."/>
        </authorList>
    </citation>
    <scope>NUCLEOTIDE SEQUENCE [LARGE SCALE GENOMIC DNA]</scope>
    <source>
        <strain>03BB102</strain>
    </source>
</reference>
<sequence length="692" mass="76336">MAREFSLENTRNIGIMAHIDAGKTTATERILYYTGRIHKIGETHEGASQMDWMEQEQERGITITSAATTAQWKGHRVNIIDTPGHVDFTVEVERSLRVLDGAVAVLDAQSGVEPQTETVWRQATTYGVPRIVFVNKMDKIGADFLYSVGTIHDRLQANAHPIQLPIGAEDEFNGIIDLVEECAYMYGNDLGTDIQRVEIPEEHKELAEEYRGKLIEAVAELDEEMMMKYLEGEEITVEELKAGIRKATTSVEFFPVICGSAFKNKGVQILLDAVIDYLPSPLDVPAIKGIVPDTDEEVERKSSDEEPFAALAFKIMTDPYVGKLTFFRVYSGVLNSGSYVKNSTKGKRERVGRILQMHANSREEISTVYAGDIAAAVGLKDTTTGDTLCDEKSLVILESMEFPEPVISVAIEPKSKADQDKMGTALSKLSEEDPTFRAHTDQETGQTIIAGMGELHLDIIVDRMRREFKVEANVGAPQVAYRETFRAAAKVEGKFARQSGGRGQFGHVWIEFEPNEEGKGFEFENKIVGGVVPREYIPAVGAGLEDALKNGVLAGYPVVDIKAALVDGSYHDVDSSEMAFKIAASMALKAAVSKCNPVILEPMMKVEVVIPEEYMGDIMGDVTSRRGRVEGMEARGNAQVVRAMVPLSEMFGYATSLRSNTQGRGTFSMVFDHYEEVPKSVSEEIIKKNKGE</sequence>
<organism>
    <name type="scientific">Bacillus cereus (strain 03BB102)</name>
    <dbReference type="NCBI Taxonomy" id="572264"/>
    <lineage>
        <taxon>Bacteria</taxon>
        <taxon>Bacillati</taxon>
        <taxon>Bacillota</taxon>
        <taxon>Bacilli</taxon>
        <taxon>Bacillales</taxon>
        <taxon>Bacillaceae</taxon>
        <taxon>Bacillus</taxon>
        <taxon>Bacillus cereus group</taxon>
    </lineage>
</organism>
<gene>
    <name evidence="1" type="primary">fusA</name>
    <name type="ordered locus">BCA_0136</name>
</gene>
<accession>C1ET36</accession>
<protein>
    <recommendedName>
        <fullName evidence="1">Elongation factor G</fullName>
        <shortName evidence="1">EF-G</shortName>
    </recommendedName>
</protein>
<dbReference type="EMBL" id="CP001407">
    <property type="protein sequence ID" value="ACO30699.1"/>
    <property type="molecule type" value="Genomic_DNA"/>
</dbReference>
<dbReference type="RefSeq" id="WP_000090364.1">
    <property type="nucleotide sequence ID" value="NZ_CP009318.1"/>
</dbReference>
<dbReference type="SMR" id="C1ET36"/>
<dbReference type="GeneID" id="45020152"/>
<dbReference type="KEGG" id="bcx:BCA_0136"/>
<dbReference type="PATRIC" id="fig|572264.18.peg.171"/>
<dbReference type="Proteomes" id="UP000002210">
    <property type="component" value="Chromosome"/>
</dbReference>
<dbReference type="GO" id="GO:0005737">
    <property type="term" value="C:cytoplasm"/>
    <property type="evidence" value="ECO:0007669"/>
    <property type="project" value="UniProtKB-SubCell"/>
</dbReference>
<dbReference type="GO" id="GO:0005525">
    <property type="term" value="F:GTP binding"/>
    <property type="evidence" value="ECO:0007669"/>
    <property type="project" value="UniProtKB-UniRule"/>
</dbReference>
<dbReference type="GO" id="GO:0003924">
    <property type="term" value="F:GTPase activity"/>
    <property type="evidence" value="ECO:0007669"/>
    <property type="project" value="InterPro"/>
</dbReference>
<dbReference type="GO" id="GO:0003746">
    <property type="term" value="F:translation elongation factor activity"/>
    <property type="evidence" value="ECO:0007669"/>
    <property type="project" value="UniProtKB-UniRule"/>
</dbReference>
<dbReference type="GO" id="GO:0032790">
    <property type="term" value="P:ribosome disassembly"/>
    <property type="evidence" value="ECO:0007669"/>
    <property type="project" value="TreeGrafter"/>
</dbReference>
<dbReference type="CDD" id="cd01886">
    <property type="entry name" value="EF-G"/>
    <property type="match status" value="1"/>
</dbReference>
<dbReference type="CDD" id="cd16262">
    <property type="entry name" value="EFG_III"/>
    <property type="match status" value="1"/>
</dbReference>
<dbReference type="CDD" id="cd01434">
    <property type="entry name" value="EFG_mtEFG1_IV"/>
    <property type="match status" value="1"/>
</dbReference>
<dbReference type="CDD" id="cd03713">
    <property type="entry name" value="EFG_mtEFG_C"/>
    <property type="match status" value="1"/>
</dbReference>
<dbReference type="CDD" id="cd04088">
    <property type="entry name" value="EFG_mtEFG_II"/>
    <property type="match status" value="1"/>
</dbReference>
<dbReference type="FunFam" id="2.40.30.10:FF:000006">
    <property type="entry name" value="Elongation factor G"/>
    <property type="match status" value="1"/>
</dbReference>
<dbReference type="FunFam" id="3.30.230.10:FF:000003">
    <property type="entry name" value="Elongation factor G"/>
    <property type="match status" value="1"/>
</dbReference>
<dbReference type="FunFam" id="3.30.70.240:FF:000001">
    <property type="entry name" value="Elongation factor G"/>
    <property type="match status" value="1"/>
</dbReference>
<dbReference type="FunFam" id="3.30.70.870:FF:000001">
    <property type="entry name" value="Elongation factor G"/>
    <property type="match status" value="1"/>
</dbReference>
<dbReference type="FunFam" id="3.40.50.300:FF:000029">
    <property type="entry name" value="Elongation factor G"/>
    <property type="match status" value="1"/>
</dbReference>
<dbReference type="Gene3D" id="3.30.230.10">
    <property type="match status" value="1"/>
</dbReference>
<dbReference type="Gene3D" id="3.30.70.240">
    <property type="match status" value="1"/>
</dbReference>
<dbReference type="Gene3D" id="3.30.70.870">
    <property type="entry name" value="Elongation Factor G (Translational Gtpase), domain 3"/>
    <property type="match status" value="1"/>
</dbReference>
<dbReference type="Gene3D" id="3.40.50.300">
    <property type="entry name" value="P-loop containing nucleotide triphosphate hydrolases"/>
    <property type="match status" value="1"/>
</dbReference>
<dbReference type="Gene3D" id="2.40.30.10">
    <property type="entry name" value="Translation factors"/>
    <property type="match status" value="1"/>
</dbReference>
<dbReference type="HAMAP" id="MF_00054_B">
    <property type="entry name" value="EF_G_EF_2_B"/>
    <property type="match status" value="1"/>
</dbReference>
<dbReference type="InterPro" id="IPR041095">
    <property type="entry name" value="EFG_II"/>
</dbReference>
<dbReference type="InterPro" id="IPR009022">
    <property type="entry name" value="EFG_III"/>
</dbReference>
<dbReference type="InterPro" id="IPR035647">
    <property type="entry name" value="EFG_III/V"/>
</dbReference>
<dbReference type="InterPro" id="IPR047872">
    <property type="entry name" value="EFG_IV"/>
</dbReference>
<dbReference type="InterPro" id="IPR035649">
    <property type="entry name" value="EFG_V"/>
</dbReference>
<dbReference type="InterPro" id="IPR000640">
    <property type="entry name" value="EFG_V-like"/>
</dbReference>
<dbReference type="InterPro" id="IPR004161">
    <property type="entry name" value="EFTu-like_2"/>
</dbReference>
<dbReference type="InterPro" id="IPR031157">
    <property type="entry name" value="G_TR_CS"/>
</dbReference>
<dbReference type="InterPro" id="IPR027417">
    <property type="entry name" value="P-loop_NTPase"/>
</dbReference>
<dbReference type="InterPro" id="IPR020568">
    <property type="entry name" value="Ribosomal_Su5_D2-typ_SF"/>
</dbReference>
<dbReference type="InterPro" id="IPR014721">
    <property type="entry name" value="Ribsml_uS5_D2-typ_fold_subgr"/>
</dbReference>
<dbReference type="InterPro" id="IPR005225">
    <property type="entry name" value="Small_GTP-bd"/>
</dbReference>
<dbReference type="InterPro" id="IPR000795">
    <property type="entry name" value="T_Tr_GTP-bd_dom"/>
</dbReference>
<dbReference type="InterPro" id="IPR009000">
    <property type="entry name" value="Transl_B-barrel_sf"/>
</dbReference>
<dbReference type="InterPro" id="IPR004540">
    <property type="entry name" value="Transl_elong_EFG/EF2"/>
</dbReference>
<dbReference type="InterPro" id="IPR005517">
    <property type="entry name" value="Transl_elong_EFG/EF2_IV"/>
</dbReference>
<dbReference type="NCBIfam" id="TIGR00484">
    <property type="entry name" value="EF-G"/>
    <property type="match status" value="1"/>
</dbReference>
<dbReference type="NCBIfam" id="NF009379">
    <property type="entry name" value="PRK12740.1-3"/>
    <property type="match status" value="1"/>
</dbReference>
<dbReference type="NCBIfam" id="NF009381">
    <property type="entry name" value="PRK12740.1-5"/>
    <property type="match status" value="1"/>
</dbReference>
<dbReference type="NCBIfam" id="NF009891">
    <property type="entry name" value="PRK13351.1-1"/>
    <property type="match status" value="1"/>
</dbReference>
<dbReference type="NCBIfam" id="TIGR00231">
    <property type="entry name" value="small_GTP"/>
    <property type="match status" value="1"/>
</dbReference>
<dbReference type="PANTHER" id="PTHR43261:SF1">
    <property type="entry name" value="RIBOSOME-RELEASING FACTOR 2, MITOCHONDRIAL"/>
    <property type="match status" value="1"/>
</dbReference>
<dbReference type="PANTHER" id="PTHR43261">
    <property type="entry name" value="TRANSLATION ELONGATION FACTOR G-RELATED"/>
    <property type="match status" value="1"/>
</dbReference>
<dbReference type="Pfam" id="PF00679">
    <property type="entry name" value="EFG_C"/>
    <property type="match status" value="1"/>
</dbReference>
<dbReference type="Pfam" id="PF14492">
    <property type="entry name" value="EFG_III"/>
    <property type="match status" value="1"/>
</dbReference>
<dbReference type="Pfam" id="PF03764">
    <property type="entry name" value="EFG_IV"/>
    <property type="match status" value="1"/>
</dbReference>
<dbReference type="Pfam" id="PF00009">
    <property type="entry name" value="GTP_EFTU"/>
    <property type="match status" value="1"/>
</dbReference>
<dbReference type="Pfam" id="PF03144">
    <property type="entry name" value="GTP_EFTU_D2"/>
    <property type="match status" value="1"/>
</dbReference>
<dbReference type="PRINTS" id="PR00315">
    <property type="entry name" value="ELONGATNFCT"/>
</dbReference>
<dbReference type="SMART" id="SM00838">
    <property type="entry name" value="EFG_C"/>
    <property type="match status" value="1"/>
</dbReference>
<dbReference type="SMART" id="SM00889">
    <property type="entry name" value="EFG_IV"/>
    <property type="match status" value="1"/>
</dbReference>
<dbReference type="SUPFAM" id="SSF54980">
    <property type="entry name" value="EF-G C-terminal domain-like"/>
    <property type="match status" value="2"/>
</dbReference>
<dbReference type="SUPFAM" id="SSF52540">
    <property type="entry name" value="P-loop containing nucleoside triphosphate hydrolases"/>
    <property type="match status" value="1"/>
</dbReference>
<dbReference type="SUPFAM" id="SSF54211">
    <property type="entry name" value="Ribosomal protein S5 domain 2-like"/>
    <property type="match status" value="1"/>
</dbReference>
<dbReference type="SUPFAM" id="SSF50447">
    <property type="entry name" value="Translation proteins"/>
    <property type="match status" value="1"/>
</dbReference>
<dbReference type="PROSITE" id="PS00301">
    <property type="entry name" value="G_TR_1"/>
    <property type="match status" value="1"/>
</dbReference>
<dbReference type="PROSITE" id="PS51722">
    <property type="entry name" value="G_TR_2"/>
    <property type="match status" value="1"/>
</dbReference>
<proteinExistence type="inferred from homology"/>
<keyword id="KW-0963">Cytoplasm</keyword>
<keyword id="KW-0251">Elongation factor</keyword>
<keyword id="KW-0342">GTP-binding</keyword>
<keyword id="KW-0547">Nucleotide-binding</keyword>
<keyword id="KW-0648">Protein biosynthesis</keyword>